<reference key="1">
    <citation type="journal article" date="2015" name="Microbiology">
        <title>Genome of Methanoregula boonei 6A8 reveals adaptations to oligotrophic peatland environments.</title>
        <authorList>
            <person name="Braeuer S."/>
            <person name="Cadillo-Quiroz H."/>
            <person name="Kyrpides N."/>
            <person name="Woyke T."/>
            <person name="Goodwin L."/>
            <person name="Detter C."/>
            <person name="Podell S."/>
            <person name="Yavitt J.B."/>
            <person name="Zinder S.H."/>
        </authorList>
    </citation>
    <scope>NUCLEOTIDE SEQUENCE [LARGE SCALE GENOMIC DNA]</scope>
    <source>
        <strain>DSM 21154 / JCM 14090 / 6A8</strain>
    </source>
</reference>
<accession>A7I4S0</accession>
<organism>
    <name type="scientific">Methanoregula boonei (strain DSM 21154 / JCM 14090 / 6A8)</name>
    <dbReference type="NCBI Taxonomy" id="456442"/>
    <lineage>
        <taxon>Archaea</taxon>
        <taxon>Methanobacteriati</taxon>
        <taxon>Methanobacteriota</taxon>
        <taxon>Stenosarchaea group</taxon>
        <taxon>Methanomicrobia</taxon>
        <taxon>Methanomicrobiales</taxon>
        <taxon>Methanoregulaceae</taxon>
        <taxon>Methanoregula</taxon>
    </lineage>
</organism>
<comment type="function">
    <text evidence="1">Catalyzes the transfer of the AMP portion of ATP to flavin mononucleotide (FMN) to produce flavin adenine dinucleotide (FAD) coenzyme.</text>
</comment>
<comment type="catalytic activity">
    <reaction evidence="1">
        <text>FMN + ATP + H(+) = FAD + diphosphate</text>
        <dbReference type="Rhea" id="RHEA:17237"/>
        <dbReference type="ChEBI" id="CHEBI:15378"/>
        <dbReference type="ChEBI" id="CHEBI:30616"/>
        <dbReference type="ChEBI" id="CHEBI:33019"/>
        <dbReference type="ChEBI" id="CHEBI:57692"/>
        <dbReference type="ChEBI" id="CHEBI:58210"/>
        <dbReference type="EC" id="2.7.7.2"/>
    </reaction>
</comment>
<comment type="cofactor">
    <cofactor evidence="1">
        <name>a divalent metal cation</name>
        <dbReference type="ChEBI" id="CHEBI:60240"/>
    </cofactor>
</comment>
<comment type="pathway">
    <text evidence="1">Cofactor biosynthesis; FAD biosynthesis; FAD from FMN: step 1/1.</text>
</comment>
<comment type="subunit">
    <text evidence="1">Homodimer.</text>
</comment>
<comment type="similarity">
    <text evidence="1">Belongs to the archaeal FAD synthase family.</text>
</comment>
<sequence length="148" mass="16674">MTARRVVATGTFDILHPGHVYYLTESRKLGDELWVIVARDENVKHKPRPILPEAQRLAMVSALRPVDHAILGDHTDMFCPIDDIRPAVITIGFNQYFDEEKLKGQLAERNLPAEVVRIGKYEDGDLASSRMIVQRIVEARGSGDQRIG</sequence>
<feature type="chain" id="PRO_0000406266" description="FAD synthase">
    <location>
        <begin position="1"/>
        <end position="148"/>
    </location>
</feature>
<feature type="binding site" evidence="1">
    <location>
        <begin position="11"/>
        <end position="12"/>
    </location>
    <ligand>
        <name>ATP</name>
        <dbReference type="ChEBI" id="CHEBI:30616"/>
    </ligand>
</feature>
<feature type="binding site" evidence="1">
    <location>
        <begin position="16"/>
        <end position="19"/>
    </location>
    <ligand>
        <name>ATP</name>
        <dbReference type="ChEBI" id="CHEBI:30616"/>
    </ligand>
</feature>
<feature type="binding site" evidence="1">
    <location>
        <position position="94"/>
    </location>
    <ligand>
        <name>ATP</name>
        <dbReference type="ChEBI" id="CHEBI:30616"/>
    </ligand>
</feature>
<feature type="binding site" evidence="1">
    <location>
        <position position="121"/>
    </location>
    <ligand>
        <name>ATP</name>
        <dbReference type="ChEBI" id="CHEBI:30616"/>
    </ligand>
</feature>
<name>RIBL_METB6</name>
<evidence type="ECO:0000255" key="1">
    <source>
        <dbReference type="HAMAP-Rule" id="MF_02115"/>
    </source>
</evidence>
<keyword id="KW-0067">ATP-binding</keyword>
<keyword id="KW-0274">FAD</keyword>
<keyword id="KW-0285">Flavoprotein</keyword>
<keyword id="KW-0288">FMN</keyword>
<keyword id="KW-0547">Nucleotide-binding</keyword>
<keyword id="KW-0548">Nucleotidyltransferase</keyword>
<keyword id="KW-1185">Reference proteome</keyword>
<keyword id="KW-0808">Transferase</keyword>
<proteinExistence type="inferred from homology"/>
<gene>
    <name evidence="1" type="primary">ribL</name>
    <name type="ordered locus">Mboo_0209</name>
</gene>
<dbReference type="EC" id="2.7.7.2" evidence="1"/>
<dbReference type="EMBL" id="CP000780">
    <property type="protein sequence ID" value="ABS54731.1"/>
    <property type="molecule type" value="Genomic_DNA"/>
</dbReference>
<dbReference type="RefSeq" id="WP_011991219.1">
    <property type="nucleotide sequence ID" value="NC_009712.1"/>
</dbReference>
<dbReference type="SMR" id="A7I4S0"/>
<dbReference type="STRING" id="456442.Mboo_0209"/>
<dbReference type="GeneID" id="5410548"/>
<dbReference type="KEGG" id="mbn:Mboo_0209"/>
<dbReference type="eggNOG" id="arCOG01222">
    <property type="taxonomic scope" value="Archaea"/>
</dbReference>
<dbReference type="HOGENOM" id="CLU_034585_2_1_2"/>
<dbReference type="OrthoDB" id="1912at2157"/>
<dbReference type="UniPathway" id="UPA00277">
    <property type="reaction ID" value="UER00407"/>
</dbReference>
<dbReference type="Proteomes" id="UP000002408">
    <property type="component" value="Chromosome"/>
</dbReference>
<dbReference type="GO" id="GO:0005524">
    <property type="term" value="F:ATP binding"/>
    <property type="evidence" value="ECO:0007669"/>
    <property type="project" value="UniProtKB-UniRule"/>
</dbReference>
<dbReference type="GO" id="GO:0003919">
    <property type="term" value="F:FMN adenylyltransferase activity"/>
    <property type="evidence" value="ECO:0007669"/>
    <property type="project" value="UniProtKB-UniRule"/>
</dbReference>
<dbReference type="GO" id="GO:0006747">
    <property type="term" value="P:FAD biosynthetic process"/>
    <property type="evidence" value="ECO:0007669"/>
    <property type="project" value="UniProtKB-UniRule"/>
</dbReference>
<dbReference type="GO" id="GO:0046444">
    <property type="term" value="P:FMN metabolic process"/>
    <property type="evidence" value="ECO:0007669"/>
    <property type="project" value="UniProtKB-UniRule"/>
</dbReference>
<dbReference type="Gene3D" id="3.40.50.620">
    <property type="entry name" value="HUPs"/>
    <property type="match status" value="1"/>
</dbReference>
<dbReference type="HAMAP" id="MF_02115">
    <property type="entry name" value="FAD_synth_arch"/>
    <property type="match status" value="1"/>
</dbReference>
<dbReference type="InterPro" id="IPR050385">
    <property type="entry name" value="Archaeal_FAD_synthase"/>
</dbReference>
<dbReference type="InterPro" id="IPR004821">
    <property type="entry name" value="Cyt_trans-like"/>
</dbReference>
<dbReference type="InterPro" id="IPR024902">
    <property type="entry name" value="FAD_synth_RibL"/>
</dbReference>
<dbReference type="InterPro" id="IPR014729">
    <property type="entry name" value="Rossmann-like_a/b/a_fold"/>
</dbReference>
<dbReference type="NCBIfam" id="TIGR00125">
    <property type="entry name" value="cyt_tran_rel"/>
    <property type="match status" value="1"/>
</dbReference>
<dbReference type="PANTHER" id="PTHR43793">
    <property type="entry name" value="FAD SYNTHASE"/>
    <property type="match status" value="1"/>
</dbReference>
<dbReference type="PANTHER" id="PTHR43793:SF1">
    <property type="entry name" value="FAD SYNTHASE"/>
    <property type="match status" value="1"/>
</dbReference>
<dbReference type="Pfam" id="PF01467">
    <property type="entry name" value="CTP_transf_like"/>
    <property type="match status" value="1"/>
</dbReference>
<dbReference type="SUPFAM" id="SSF52374">
    <property type="entry name" value="Nucleotidylyl transferase"/>
    <property type="match status" value="1"/>
</dbReference>
<protein>
    <recommendedName>
        <fullName evidence="1">FAD synthase</fullName>
        <ecNumber evidence="1">2.7.7.2</ecNumber>
    </recommendedName>
    <alternativeName>
        <fullName evidence="1">FMN adenylyltransferase</fullName>
    </alternativeName>
    <alternativeName>
        <fullName evidence="1">Flavin adenine dinucleotide synthase</fullName>
    </alternativeName>
</protein>